<feature type="chain" id="PRO_1000164082" description="Redox-sensing transcriptional repressor Rex">
    <location>
        <begin position="1"/>
        <end position="210"/>
    </location>
</feature>
<feature type="DNA-binding region" description="H-T-H motif" evidence="1">
    <location>
        <begin position="17"/>
        <end position="56"/>
    </location>
</feature>
<feature type="binding site" evidence="1">
    <location>
        <begin position="91"/>
        <end position="96"/>
    </location>
    <ligand>
        <name>NAD(+)</name>
        <dbReference type="ChEBI" id="CHEBI:57540"/>
    </ligand>
</feature>
<keyword id="KW-0963">Cytoplasm</keyword>
<keyword id="KW-0238">DNA-binding</keyword>
<keyword id="KW-0520">NAD</keyword>
<keyword id="KW-0678">Repressor</keyword>
<keyword id="KW-0804">Transcription</keyword>
<keyword id="KW-0805">Transcription regulation</keyword>
<dbReference type="EMBL" id="CP001581">
    <property type="protein sequence ID" value="ACO86329.1"/>
    <property type="molecule type" value="Genomic_DNA"/>
</dbReference>
<dbReference type="RefSeq" id="WP_003357537.1">
    <property type="nucleotide sequence ID" value="NC_012563.1"/>
</dbReference>
<dbReference type="SMR" id="C1FLW3"/>
<dbReference type="KEGG" id="cby:CLM_3740"/>
<dbReference type="eggNOG" id="COG2344">
    <property type="taxonomic scope" value="Bacteria"/>
</dbReference>
<dbReference type="HOGENOM" id="CLU_061534_1_0_9"/>
<dbReference type="Proteomes" id="UP000001374">
    <property type="component" value="Chromosome"/>
</dbReference>
<dbReference type="GO" id="GO:0005737">
    <property type="term" value="C:cytoplasm"/>
    <property type="evidence" value="ECO:0007669"/>
    <property type="project" value="UniProtKB-SubCell"/>
</dbReference>
<dbReference type="GO" id="GO:0003677">
    <property type="term" value="F:DNA binding"/>
    <property type="evidence" value="ECO:0007669"/>
    <property type="project" value="UniProtKB-UniRule"/>
</dbReference>
<dbReference type="GO" id="GO:0003700">
    <property type="term" value="F:DNA-binding transcription factor activity"/>
    <property type="evidence" value="ECO:0007669"/>
    <property type="project" value="UniProtKB-UniRule"/>
</dbReference>
<dbReference type="GO" id="GO:0045892">
    <property type="term" value="P:negative regulation of DNA-templated transcription"/>
    <property type="evidence" value="ECO:0007669"/>
    <property type="project" value="InterPro"/>
</dbReference>
<dbReference type="GO" id="GO:0051775">
    <property type="term" value="P:response to redox state"/>
    <property type="evidence" value="ECO:0007669"/>
    <property type="project" value="InterPro"/>
</dbReference>
<dbReference type="Gene3D" id="3.40.50.720">
    <property type="entry name" value="NAD(P)-binding Rossmann-like Domain"/>
    <property type="match status" value="1"/>
</dbReference>
<dbReference type="Gene3D" id="1.10.10.10">
    <property type="entry name" value="Winged helix-like DNA-binding domain superfamily/Winged helix DNA-binding domain"/>
    <property type="match status" value="1"/>
</dbReference>
<dbReference type="HAMAP" id="MF_01131">
    <property type="entry name" value="Rex"/>
    <property type="match status" value="1"/>
</dbReference>
<dbReference type="InterPro" id="IPR003781">
    <property type="entry name" value="CoA-bd"/>
</dbReference>
<dbReference type="InterPro" id="IPR036291">
    <property type="entry name" value="NAD(P)-bd_dom_sf"/>
</dbReference>
<dbReference type="InterPro" id="IPR009718">
    <property type="entry name" value="Rex_DNA-bd_C_dom"/>
</dbReference>
<dbReference type="InterPro" id="IPR022876">
    <property type="entry name" value="Tscrpt_rep_Rex"/>
</dbReference>
<dbReference type="InterPro" id="IPR036388">
    <property type="entry name" value="WH-like_DNA-bd_sf"/>
</dbReference>
<dbReference type="InterPro" id="IPR036390">
    <property type="entry name" value="WH_DNA-bd_sf"/>
</dbReference>
<dbReference type="NCBIfam" id="NF003989">
    <property type="entry name" value="PRK05472.1-3"/>
    <property type="match status" value="1"/>
</dbReference>
<dbReference type="NCBIfam" id="NF003990">
    <property type="entry name" value="PRK05472.1-4"/>
    <property type="match status" value="1"/>
</dbReference>
<dbReference type="NCBIfam" id="NF003993">
    <property type="entry name" value="PRK05472.2-2"/>
    <property type="match status" value="1"/>
</dbReference>
<dbReference type="NCBIfam" id="NF003994">
    <property type="entry name" value="PRK05472.2-3"/>
    <property type="match status" value="1"/>
</dbReference>
<dbReference type="NCBIfam" id="NF003995">
    <property type="entry name" value="PRK05472.2-4"/>
    <property type="match status" value="1"/>
</dbReference>
<dbReference type="NCBIfam" id="NF003996">
    <property type="entry name" value="PRK05472.2-5"/>
    <property type="match status" value="1"/>
</dbReference>
<dbReference type="PANTHER" id="PTHR35786">
    <property type="entry name" value="REDOX-SENSING TRANSCRIPTIONAL REPRESSOR REX"/>
    <property type="match status" value="1"/>
</dbReference>
<dbReference type="PANTHER" id="PTHR35786:SF1">
    <property type="entry name" value="REDOX-SENSING TRANSCRIPTIONAL REPRESSOR REX 1"/>
    <property type="match status" value="1"/>
</dbReference>
<dbReference type="Pfam" id="PF02629">
    <property type="entry name" value="CoA_binding"/>
    <property type="match status" value="1"/>
</dbReference>
<dbReference type="Pfam" id="PF06971">
    <property type="entry name" value="Put_DNA-bind_N"/>
    <property type="match status" value="1"/>
</dbReference>
<dbReference type="SMART" id="SM00881">
    <property type="entry name" value="CoA_binding"/>
    <property type="match status" value="1"/>
</dbReference>
<dbReference type="SUPFAM" id="SSF51735">
    <property type="entry name" value="NAD(P)-binding Rossmann-fold domains"/>
    <property type="match status" value="1"/>
</dbReference>
<dbReference type="SUPFAM" id="SSF46785">
    <property type="entry name" value="Winged helix' DNA-binding domain"/>
    <property type="match status" value="1"/>
</dbReference>
<name>REX_CLOBJ</name>
<gene>
    <name evidence="1" type="primary">rex</name>
    <name type="ordered locus">CLM_3740</name>
</gene>
<comment type="function">
    <text evidence="1">Modulates transcription in response to changes in cellular NADH/NAD(+) redox state.</text>
</comment>
<comment type="subunit">
    <text evidence="1">Homodimer.</text>
</comment>
<comment type="subcellular location">
    <subcellularLocation>
        <location evidence="1">Cytoplasm</location>
    </subcellularLocation>
</comment>
<comment type="similarity">
    <text evidence="1">Belongs to the transcriptional regulatory Rex family.</text>
</comment>
<organism>
    <name type="scientific">Clostridium botulinum (strain Kyoto / Type A2)</name>
    <dbReference type="NCBI Taxonomy" id="536232"/>
    <lineage>
        <taxon>Bacteria</taxon>
        <taxon>Bacillati</taxon>
        <taxon>Bacillota</taxon>
        <taxon>Clostridia</taxon>
        <taxon>Eubacteriales</taxon>
        <taxon>Clostridiaceae</taxon>
        <taxon>Clostridium</taxon>
    </lineage>
</organism>
<proteinExistence type="inferred from homology"/>
<reference key="1">
    <citation type="submission" date="2008-10" db="EMBL/GenBank/DDBJ databases">
        <title>Genome sequence of Clostridium botulinum A2 Kyoto.</title>
        <authorList>
            <person name="Shrivastava S."/>
            <person name="Brinkac L.M."/>
            <person name="Brown J.L."/>
            <person name="Bruce D."/>
            <person name="Detter C.C."/>
            <person name="Johnson E.A."/>
            <person name="Munk C.A."/>
            <person name="Smith L.A."/>
            <person name="Smith T.J."/>
            <person name="Sutton G."/>
            <person name="Brettin T.S."/>
        </authorList>
    </citation>
    <scope>NUCLEOTIDE SEQUENCE [LARGE SCALE GENOMIC DNA]</scope>
    <source>
        <strain>Kyoto / Type A2</strain>
    </source>
</reference>
<protein>
    <recommendedName>
        <fullName evidence="1">Redox-sensing transcriptional repressor Rex</fullName>
    </recommendedName>
</protein>
<sequence length="210" mass="23754">MDKKKNISMAVIRRLPKYHRYLYELLKNDVDRISSKELSEKIGFTASQIRQDLNCFGDFGQQGYGYNVSELHHQISNILGLNNPYNIIIIGAGNIGQALANYTRFSKLGFNVKAMFDTNPKLIGLKIREIEILDIDYLSSYLEKNNIDIGIICVPHDNAQKVANILVKNDIKGIWNFAPIDLSVPEDVVVENVHLSDSLLTLTCLINKTE</sequence>
<accession>C1FLW3</accession>
<evidence type="ECO:0000255" key="1">
    <source>
        <dbReference type="HAMAP-Rule" id="MF_01131"/>
    </source>
</evidence>